<protein>
    <recommendedName>
        <fullName evidence="1">Small ribosomal subunit protein uS7</fullName>
    </recommendedName>
    <alternativeName>
        <fullName evidence="2">30S ribosomal protein S7</fullName>
    </alternativeName>
</protein>
<keyword id="KW-1185">Reference proteome</keyword>
<keyword id="KW-0687">Ribonucleoprotein</keyword>
<keyword id="KW-0689">Ribosomal protein</keyword>
<keyword id="KW-0694">RNA-binding</keyword>
<keyword id="KW-0699">rRNA-binding</keyword>
<name>RS7_METST</name>
<reference key="1">
    <citation type="journal article" date="2006" name="J. Bacteriol.">
        <title>The genome sequence of Methanosphaera stadtmanae reveals why this human intestinal archaeon is restricted to methanol and H2 for methane formation and ATP synthesis.</title>
        <authorList>
            <person name="Fricke W.F."/>
            <person name="Seedorf H."/>
            <person name="Henne A."/>
            <person name="Kruer M."/>
            <person name="Liesegang H."/>
            <person name="Hedderich R."/>
            <person name="Gottschalk G."/>
            <person name="Thauer R.K."/>
        </authorList>
    </citation>
    <scope>NUCLEOTIDE SEQUENCE [LARGE SCALE GENOMIC DNA]</scope>
    <source>
        <strain>ATCC 43021 / DSM 3091 / JCM 11832 / MCB-3</strain>
    </source>
</reference>
<sequence length="187" mass="21174">MSFKLFDKWDVTEVTVEDMGLQNYVCLDEIVVPHTMGRHVKRQFAKSKVSIVERLMNKIMRTERNSGKKNKAYSIVEDALEIINNKTKQNPVQVLVKAVENTAPREETTRIKYGGIGYQIAVDIAPQRRVDLSLGFITKGAMQSAFKNKKSAAQCLADEILLASDEDSRSFAVQKKEEKERVARSAH</sequence>
<evidence type="ECO:0000255" key="1">
    <source>
        <dbReference type="HAMAP-Rule" id="MF_00480"/>
    </source>
</evidence>
<evidence type="ECO:0000305" key="2"/>
<dbReference type="EMBL" id="CP000102">
    <property type="protein sequence ID" value="ABC57744.1"/>
    <property type="molecule type" value="Genomic_DNA"/>
</dbReference>
<dbReference type="RefSeq" id="WP_011406943.1">
    <property type="nucleotide sequence ID" value="NC_007681.1"/>
</dbReference>
<dbReference type="SMR" id="Q2NEK9"/>
<dbReference type="STRING" id="339860.Msp_1368"/>
<dbReference type="KEGG" id="mst:Msp_1368"/>
<dbReference type="eggNOG" id="arCOG04254">
    <property type="taxonomic scope" value="Archaea"/>
</dbReference>
<dbReference type="HOGENOM" id="CLU_063975_0_0_2"/>
<dbReference type="OrthoDB" id="45346at2157"/>
<dbReference type="Proteomes" id="UP000001931">
    <property type="component" value="Chromosome"/>
</dbReference>
<dbReference type="GO" id="GO:0015935">
    <property type="term" value="C:small ribosomal subunit"/>
    <property type="evidence" value="ECO:0007669"/>
    <property type="project" value="InterPro"/>
</dbReference>
<dbReference type="GO" id="GO:0019843">
    <property type="term" value="F:rRNA binding"/>
    <property type="evidence" value="ECO:0007669"/>
    <property type="project" value="UniProtKB-UniRule"/>
</dbReference>
<dbReference type="GO" id="GO:0003735">
    <property type="term" value="F:structural constituent of ribosome"/>
    <property type="evidence" value="ECO:0007669"/>
    <property type="project" value="InterPro"/>
</dbReference>
<dbReference type="GO" id="GO:0006412">
    <property type="term" value="P:translation"/>
    <property type="evidence" value="ECO:0007669"/>
    <property type="project" value="UniProtKB-UniRule"/>
</dbReference>
<dbReference type="CDD" id="cd14867">
    <property type="entry name" value="uS7_Eukaryote"/>
    <property type="match status" value="1"/>
</dbReference>
<dbReference type="Gene3D" id="1.10.455.10">
    <property type="entry name" value="Ribosomal protein S7 domain"/>
    <property type="match status" value="1"/>
</dbReference>
<dbReference type="HAMAP" id="MF_00480_A">
    <property type="entry name" value="Ribosomal_uS7_A"/>
    <property type="match status" value="1"/>
</dbReference>
<dbReference type="InterPro" id="IPR000235">
    <property type="entry name" value="Ribosomal_uS7"/>
</dbReference>
<dbReference type="InterPro" id="IPR026018">
    <property type="entry name" value="Ribosomal_uS7_arc"/>
</dbReference>
<dbReference type="InterPro" id="IPR020606">
    <property type="entry name" value="Ribosomal_uS7_CS"/>
</dbReference>
<dbReference type="InterPro" id="IPR023798">
    <property type="entry name" value="Ribosomal_uS7_dom"/>
</dbReference>
<dbReference type="InterPro" id="IPR036823">
    <property type="entry name" value="Ribosomal_uS7_dom_sf"/>
</dbReference>
<dbReference type="InterPro" id="IPR005716">
    <property type="entry name" value="Ribosomal_uS7_euk/arc"/>
</dbReference>
<dbReference type="NCBIfam" id="NF003106">
    <property type="entry name" value="PRK04027.1"/>
    <property type="match status" value="1"/>
</dbReference>
<dbReference type="NCBIfam" id="TIGR01028">
    <property type="entry name" value="uS7_euk_arch"/>
    <property type="match status" value="1"/>
</dbReference>
<dbReference type="PANTHER" id="PTHR11205">
    <property type="entry name" value="RIBOSOMAL PROTEIN S7"/>
    <property type="match status" value="1"/>
</dbReference>
<dbReference type="Pfam" id="PF00177">
    <property type="entry name" value="Ribosomal_S7"/>
    <property type="match status" value="1"/>
</dbReference>
<dbReference type="PIRSF" id="PIRSF002122">
    <property type="entry name" value="RPS7p_RPS7a_RPS5e_RPS7o"/>
    <property type="match status" value="1"/>
</dbReference>
<dbReference type="SUPFAM" id="SSF47973">
    <property type="entry name" value="Ribosomal protein S7"/>
    <property type="match status" value="1"/>
</dbReference>
<dbReference type="PROSITE" id="PS00052">
    <property type="entry name" value="RIBOSOMAL_S7"/>
    <property type="match status" value="1"/>
</dbReference>
<proteinExistence type="inferred from homology"/>
<gene>
    <name evidence="1" type="primary">rps7</name>
    <name type="ordered locus">Msp_1368</name>
</gene>
<organism>
    <name type="scientific">Methanosphaera stadtmanae (strain ATCC 43021 / DSM 3091 / JCM 11832 / MCB-3)</name>
    <dbReference type="NCBI Taxonomy" id="339860"/>
    <lineage>
        <taxon>Archaea</taxon>
        <taxon>Methanobacteriati</taxon>
        <taxon>Methanobacteriota</taxon>
        <taxon>Methanomada group</taxon>
        <taxon>Methanobacteria</taxon>
        <taxon>Methanobacteriales</taxon>
        <taxon>Methanobacteriaceae</taxon>
        <taxon>Methanosphaera</taxon>
    </lineage>
</organism>
<feature type="chain" id="PRO_0000241788" description="Small ribosomal subunit protein uS7">
    <location>
        <begin position="1"/>
        <end position="187"/>
    </location>
</feature>
<comment type="function">
    <text evidence="1">One of the primary rRNA binding proteins, it binds directly to 16S rRNA where it nucleates assembly of the head domain of the 30S subunit. Is located at the subunit interface close to the decoding center.</text>
</comment>
<comment type="subunit">
    <text evidence="1">Part of the 30S ribosomal subunit.</text>
</comment>
<comment type="similarity">
    <text evidence="1">Belongs to the universal ribosomal protein uS7 family.</text>
</comment>
<accession>Q2NEK9</accession>